<proteinExistence type="evidence at protein level"/>
<evidence type="ECO:0000250" key="1">
    <source>
        <dbReference type="UniProtKB" id="P62825"/>
    </source>
</evidence>
<evidence type="ECO:0000255" key="2">
    <source>
        <dbReference type="PROSITE-ProRule" id="PRU00752"/>
    </source>
</evidence>
<evidence type="ECO:0000269" key="3">
    <source>
    </source>
</evidence>
<evidence type="ECO:0000269" key="4">
    <source>
    </source>
</evidence>
<evidence type="ECO:0000269" key="5">
    <source>
    </source>
</evidence>
<evidence type="ECO:0000305" key="6"/>
<sequence>MAQPQNVPTFKLVLVGDGGTGKTTFVKRHLTGEFEKKYIATLGVEVHPLHFHTNFGEICFNVWDTAGQEKLGGLRDGYYIQGQCGIIMFDVTSRITYKNVPHWWRDLVRVCENIPIVLCGNKVDVKERKVKAKAITFHRKKNLQYYDISAKSNYNFEKPFLWLARKLVGNPNLEFVASPALAPPEVQVDQQLLAQYQQEMNEAAAMPLPDEDDADL</sequence>
<protein>
    <recommendedName>
        <fullName>GTP-binding nuclear protein spi1</fullName>
    </recommendedName>
</protein>
<accession>P28748</accession>
<gene>
    <name type="primary">spi1</name>
    <name type="ORF">SPBC1289.03c</name>
</gene>
<feature type="chain" id="PRO_0000208735" description="GTP-binding nuclear protein spi1">
    <location>
        <begin position="1"/>
        <end position="216"/>
    </location>
</feature>
<feature type="domain" description="Small GTPase Ran-type" evidence="2">
    <location>
        <begin position="6"/>
        <end position="170"/>
    </location>
</feature>
<feature type="region of interest" description="Switch-I" evidence="2">
    <location>
        <begin position="36"/>
        <end position="44"/>
    </location>
</feature>
<feature type="region of interest" description="Switch-II" evidence="2">
    <location>
        <begin position="67"/>
        <end position="83"/>
    </location>
</feature>
<feature type="binding site" evidence="1">
    <location>
        <begin position="17"/>
        <end position="24"/>
    </location>
    <ligand>
        <name>GTP</name>
        <dbReference type="ChEBI" id="CHEBI:37565"/>
    </ligand>
</feature>
<feature type="binding site" evidence="1">
    <location>
        <position position="67"/>
    </location>
    <ligand>
        <name>GTP</name>
        <dbReference type="ChEBI" id="CHEBI:37565"/>
    </ligand>
</feature>
<feature type="binding site" evidence="1">
    <location>
        <begin position="121"/>
        <end position="124"/>
    </location>
    <ligand>
        <name>GTP</name>
        <dbReference type="ChEBI" id="CHEBI:37565"/>
    </ligand>
</feature>
<feature type="binding site" evidence="1">
    <location>
        <begin position="149"/>
        <end position="151"/>
    </location>
    <ligand>
        <name>GTP</name>
        <dbReference type="ChEBI" id="CHEBI:37565"/>
    </ligand>
</feature>
<feature type="modified residue" description="Phosphothreonine" evidence="3">
    <location>
        <position position="20"/>
    </location>
</feature>
<dbReference type="EMBL" id="M73527">
    <property type="status" value="NOT_ANNOTATED_CDS"/>
    <property type="molecule type" value="Genomic_DNA"/>
</dbReference>
<dbReference type="EMBL" id="CU329671">
    <property type="protein sequence ID" value="CAB38683.1"/>
    <property type="molecule type" value="Genomic_DNA"/>
</dbReference>
<dbReference type="PIR" id="A40039">
    <property type="entry name" value="A40039"/>
</dbReference>
<dbReference type="RefSeq" id="NP_596827.1">
    <property type="nucleotide sequence ID" value="NM_001023848.2"/>
</dbReference>
<dbReference type="SMR" id="P28748"/>
<dbReference type="BioGRID" id="276686">
    <property type="interactions" value="20"/>
</dbReference>
<dbReference type="FunCoup" id="P28748">
    <property type="interactions" value="1112"/>
</dbReference>
<dbReference type="STRING" id="284812.P28748"/>
<dbReference type="iPTMnet" id="P28748"/>
<dbReference type="PaxDb" id="4896-SPBC1289.03c.1"/>
<dbReference type="EnsemblFungi" id="SPBC1289.03c.1">
    <property type="protein sequence ID" value="SPBC1289.03c.1:pep"/>
    <property type="gene ID" value="SPBC1289.03c"/>
</dbReference>
<dbReference type="GeneID" id="2540149"/>
<dbReference type="KEGG" id="spo:2540149"/>
<dbReference type="PomBase" id="SPBC1289.03c">
    <property type="gene designation" value="spi1"/>
</dbReference>
<dbReference type="VEuPathDB" id="FungiDB:SPBC1289.03c"/>
<dbReference type="eggNOG" id="KOG0096">
    <property type="taxonomic scope" value="Eukaryota"/>
</dbReference>
<dbReference type="HOGENOM" id="CLU_041217_13_0_1"/>
<dbReference type="InParanoid" id="P28748"/>
<dbReference type="OMA" id="FNAWDTA"/>
<dbReference type="PhylomeDB" id="P28748"/>
<dbReference type="Reactome" id="R-SPO-5578749">
    <property type="pathway name" value="Transcriptional regulation by small RNAs"/>
</dbReference>
<dbReference type="Reactome" id="R-SPO-9615933">
    <property type="pathway name" value="Postmitotic nuclear pore complex (NPC) reformation"/>
</dbReference>
<dbReference type="PRO" id="PR:P28748"/>
<dbReference type="Proteomes" id="UP000002485">
    <property type="component" value="Chromosome II"/>
</dbReference>
<dbReference type="GO" id="GO:0005737">
    <property type="term" value="C:cytoplasm"/>
    <property type="evidence" value="ECO:0000318"/>
    <property type="project" value="GO_Central"/>
</dbReference>
<dbReference type="GO" id="GO:0005829">
    <property type="term" value="C:cytosol"/>
    <property type="evidence" value="ECO:0007005"/>
    <property type="project" value="PomBase"/>
</dbReference>
<dbReference type="GO" id="GO:0005634">
    <property type="term" value="C:nucleus"/>
    <property type="evidence" value="ECO:0007005"/>
    <property type="project" value="PomBase"/>
</dbReference>
<dbReference type="GO" id="GO:0005525">
    <property type="term" value="F:GTP binding"/>
    <property type="evidence" value="ECO:0000255"/>
    <property type="project" value="PomBase"/>
</dbReference>
<dbReference type="GO" id="GO:0003924">
    <property type="term" value="F:GTPase activity"/>
    <property type="evidence" value="ECO:0000314"/>
    <property type="project" value="PomBase"/>
</dbReference>
<dbReference type="GO" id="GO:0016973">
    <property type="term" value="P:poly(A)+ mRNA export from nucleus"/>
    <property type="evidence" value="ECO:0000316"/>
    <property type="project" value="PomBase"/>
</dbReference>
<dbReference type="GO" id="GO:0006606">
    <property type="term" value="P:protein import into nucleus"/>
    <property type="evidence" value="ECO:0000315"/>
    <property type="project" value="PomBase"/>
</dbReference>
<dbReference type="GO" id="GO:0000054">
    <property type="term" value="P:ribosomal subunit export from nucleus"/>
    <property type="evidence" value="ECO:0000318"/>
    <property type="project" value="GO_Central"/>
</dbReference>
<dbReference type="CDD" id="cd00877">
    <property type="entry name" value="Ran"/>
    <property type="match status" value="1"/>
</dbReference>
<dbReference type="FunFam" id="3.40.50.300:FF:000131">
    <property type="entry name" value="GTP-binding nuclear protein Ran"/>
    <property type="match status" value="1"/>
</dbReference>
<dbReference type="Gene3D" id="3.40.50.300">
    <property type="entry name" value="P-loop containing nucleotide triphosphate hydrolases"/>
    <property type="match status" value="1"/>
</dbReference>
<dbReference type="InterPro" id="IPR027417">
    <property type="entry name" value="P-loop_NTPase"/>
</dbReference>
<dbReference type="InterPro" id="IPR002041">
    <property type="entry name" value="Ran_GTPase"/>
</dbReference>
<dbReference type="InterPro" id="IPR005225">
    <property type="entry name" value="Small_GTP-bd"/>
</dbReference>
<dbReference type="InterPro" id="IPR001806">
    <property type="entry name" value="Small_GTPase"/>
</dbReference>
<dbReference type="NCBIfam" id="TIGR00231">
    <property type="entry name" value="small_GTP"/>
    <property type="match status" value="1"/>
</dbReference>
<dbReference type="PANTHER" id="PTHR24071:SF0">
    <property type="entry name" value="GTP-BINDING NUCLEAR PROTEIN RAN"/>
    <property type="match status" value="1"/>
</dbReference>
<dbReference type="PANTHER" id="PTHR24071">
    <property type="entry name" value="RAN GTPASE"/>
    <property type="match status" value="1"/>
</dbReference>
<dbReference type="Pfam" id="PF00071">
    <property type="entry name" value="Ras"/>
    <property type="match status" value="1"/>
</dbReference>
<dbReference type="PRINTS" id="PR00627">
    <property type="entry name" value="GTPRANTC4"/>
</dbReference>
<dbReference type="SMART" id="SM00175">
    <property type="entry name" value="RAB"/>
    <property type="match status" value="1"/>
</dbReference>
<dbReference type="SMART" id="SM00176">
    <property type="entry name" value="RAN"/>
    <property type="match status" value="1"/>
</dbReference>
<dbReference type="SMART" id="SM00173">
    <property type="entry name" value="RAS"/>
    <property type="match status" value="1"/>
</dbReference>
<dbReference type="SMART" id="SM00174">
    <property type="entry name" value="RHO"/>
    <property type="match status" value="1"/>
</dbReference>
<dbReference type="SUPFAM" id="SSF52540">
    <property type="entry name" value="P-loop containing nucleoside triphosphate hydrolases"/>
    <property type="match status" value="1"/>
</dbReference>
<dbReference type="PROSITE" id="PS51418">
    <property type="entry name" value="RAN"/>
    <property type="match status" value="1"/>
</dbReference>
<keyword id="KW-0342">GTP-binding</keyword>
<keyword id="KW-0547">Nucleotide-binding</keyword>
<keyword id="KW-0539">Nucleus</keyword>
<keyword id="KW-0597">Phosphoprotein</keyword>
<keyword id="KW-0653">Protein transport</keyword>
<keyword id="KW-1185">Reference proteome</keyword>
<keyword id="KW-0813">Transport</keyword>
<reference key="1">
    <citation type="journal article" date="1991" name="Cell">
        <title>Premature initiation of mitosis in yeast lacking RCC1 or an interacting GTPase.</title>
        <authorList>
            <person name="Matsumoto T."/>
            <person name="Beach D.H."/>
        </authorList>
    </citation>
    <scope>NUCLEOTIDE SEQUENCE [GENOMIC DNA]</scope>
</reference>
<reference key="2">
    <citation type="journal article" date="2002" name="Nature">
        <title>The genome sequence of Schizosaccharomyces pombe.</title>
        <authorList>
            <person name="Wood V."/>
            <person name="Gwilliam R."/>
            <person name="Rajandream M.A."/>
            <person name="Lyne M.H."/>
            <person name="Lyne R."/>
            <person name="Stewart A."/>
            <person name="Sgouros J.G."/>
            <person name="Peat N."/>
            <person name="Hayles J."/>
            <person name="Baker S.G."/>
            <person name="Basham D."/>
            <person name="Bowman S."/>
            <person name="Brooks K."/>
            <person name="Brown D."/>
            <person name="Brown S."/>
            <person name="Chillingworth T."/>
            <person name="Churcher C.M."/>
            <person name="Collins M."/>
            <person name="Connor R."/>
            <person name="Cronin A."/>
            <person name="Davis P."/>
            <person name="Feltwell T."/>
            <person name="Fraser A."/>
            <person name="Gentles S."/>
            <person name="Goble A."/>
            <person name="Hamlin N."/>
            <person name="Harris D.E."/>
            <person name="Hidalgo J."/>
            <person name="Hodgson G."/>
            <person name="Holroyd S."/>
            <person name="Hornsby T."/>
            <person name="Howarth S."/>
            <person name="Huckle E.J."/>
            <person name="Hunt S."/>
            <person name="Jagels K."/>
            <person name="James K.D."/>
            <person name="Jones L."/>
            <person name="Jones M."/>
            <person name="Leather S."/>
            <person name="McDonald S."/>
            <person name="McLean J."/>
            <person name="Mooney P."/>
            <person name="Moule S."/>
            <person name="Mungall K.L."/>
            <person name="Murphy L.D."/>
            <person name="Niblett D."/>
            <person name="Odell C."/>
            <person name="Oliver K."/>
            <person name="O'Neil S."/>
            <person name="Pearson D."/>
            <person name="Quail M.A."/>
            <person name="Rabbinowitsch E."/>
            <person name="Rutherford K.M."/>
            <person name="Rutter S."/>
            <person name="Saunders D."/>
            <person name="Seeger K."/>
            <person name="Sharp S."/>
            <person name="Skelton J."/>
            <person name="Simmonds M.N."/>
            <person name="Squares R."/>
            <person name="Squares S."/>
            <person name="Stevens K."/>
            <person name="Taylor K."/>
            <person name="Taylor R.G."/>
            <person name="Tivey A."/>
            <person name="Walsh S.V."/>
            <person name="Warren T."/>
            <person name="Whitehead S."/>
            <person name="Woodward J.R."/>
            <person name="Volckaert G."/>
            <person name="Aert R."/>
            <person name="Robben J."/>
            <person name="Grymonprez B."/>
            <person name="Weltjens I."/>
            <person name="Vanstreels E."/>
            <person name="Rieger M."/>
            <person name="Schaefer M."/>
            <person name="Mueller-Auer S."/>
            <person name="Gabel C."/>
            <person name="Fuchs M."/>
            <person name="Duesterhoeft A."/>
            <person name="Fritzc C."/>
            <person name="Holzer E."/>
            <person name="Moestl D."/>
            <person name="Hilbert H."/>
            <person name="Borzym K."/>
            <person name="Langer I."/>
            <person name="Beck A."/>
            <person name="Lehrach H."/>
            <person name="Reinhardt R."/>
            <person name="Pohl T.M."/>
            <person name="Eger P."/>
            <person name="Zimmermann W."/>
            <person name="Wedler H."/>
            <person name="Wambutt R."/>
            <person name="Purnelle B."/>
            <person name="Goffeau A."/>
            <person name="Cadieu E."/>
            <person name="Dreano S."/>
            <person name="Gloux S."/>
            <person name="Lelaure V."/>
            <person name="Mottier S."/>
            <person name="Galibert F."/>
            <person name="Aves S.J."/>
            <person name="Xiang Z."/>
            <person name="Hunt C."/>
            <person name="Moore K."/>
            <person name="Hurst S.M."/>
            <person name="Lucas M."/>
            <person name="Rochet M."/>
            <person name="Gaillardin C."/>
            <person name="Tallada V.A."/>
            <person name="Garzon A."/>
            <person name="Thode G."/>
            <person name="Daga R.R."/>
            <person name="Cruzado L."/>
            <person name="Jimenez J."/>
            <person name="Sanchez M."/>
            <person name="del Rey F."/>
            <person name="Benito J."/>
            <person name="Dominguez A."/>
            <person name="Revuelta J.L."/>
            <person name="Moreno S."/>
            <person name="Armstrong J."/>
            <person name="Forsburg S.L."/>
            <person name="Cerutti L."/>
            <person name="Lowe T."/>
            <person name="McCombie W.R."/>
            <person name="Paulsen I."/>
            <person name="Potashkin J."/>
            <person name="Shpakovski G.V."/>
            <person name="Ussery D."/>
            <person name="Barrell B.G."/>
            <person name="Nurse P."/>
        </authorList>
    </citation>
    <scope>NUCLEOTIDE SEQUENCE [LARGE SCALE GENOMIC DNA]</scope>
    <source>
        <strain>972 / ATCC 24843</strain>
    </source>
</reference>
<reference key="3">
    <citation type="journal article" date="1996" name="EMBO J.">
        <title>Dis3, implicated in mitotic control, binds directly to Ran and enhances the GEF activity of RCC1.</title>
        <authorList>
            <person name="Noguchi E."/>
            <person name="Hayashi N."/>
            <person name="Azuma Y."/>
            <person name="Seki T."/>
            <person name="Nakamura M."/>
            <person name="Nakashima N."/>
            <person name="Yanagida M."/>
            <person name="He X."/>
            <person name="Mueller U."/>
            <person name="Sazer S."/>
            <person name="Nishimoto T."/>
        </authorList>
    </citation>
    <scope>INTERACTION WITH DIS3 AND PIM1</scope>
</reference>
<reference key="4">
    <citation type="journal article" date="2008" name="Genes Cells">
        <title>Schizosaccharomyces pombe Snf2SR, a novel SNF2 family protein, interacts with Ran GTPase and modulates both RanGEF and RanGAP activities.</title>
        <authorList>
            <person name="Ohba T."/>
            <person name="Nishijima H."/>
            <person name="Nishitani H."/>
            <person name="Nishimoto T."/>
        </authorList>
    </citation>
    <scope>FUNCTION</scope>
    <scope>INTERACTION WITH FFT3</scope>
</reference>
<reference key="5">
    <citation type="journal article" date="2008" name="J. Proteome Res.">
        <title>Phosphoproteome analysis of fission yeast.</title>
        <authorList>
            <person name="Wilson-Grady J.T."/>
            <person name="Villen J."/>
            <person name="Gygi S.P."/>
        </authorList>
    </citation>
    <scope>PHOSPHORYLATION [LARGE SCALE ANALYSIS] AT THR-20</scope>
    <scope>IDENTIFICATION BY MASS SPECTROMETRY</scope>
</reference>
<comment type="function">
    <text evidence="4">GTP-binding protein involved in nucleocytoplasmic transport. Required for the import of protein into the nucleus and also for RNA export.</text>
</comment>
<comment type="subunit">
    <text evidence="1 4 5">Oligomer of dis3, pim1 and spi1. Found in a nuclear export complex with RanGTP, exportin and pre-miRNA (By similarity). Interacts with fft3.</text>
</comment>
<comment type="subcellular location">
    <subcellularLocation>
        <location>Nucleus</location>
    </subcellularLocation>
</comment>
<comment type="similarity">
    <text evidence="2 6">Belongs to the small GTPase superfamily. Ran family.</text>
</comment>
<name>SPI1_SCHPO</name>
<organism>
    <name type="scientific">Schizosaccharomyces pombe (strain 972 / ATCC 24843)</name>
    <name type="common">Fission yeast</name>
    <dbReference type="NCBI Taxonomy" id="284812"/>
    <lineage>
        <taxon>Eukaryota</taxon>
        <taxon>Fungi</taxon>
        <taxon>Dikarya</taxon>
        <taxon>Ascomycota</taxon>
        <taxon>Taphrinomycotina</taxon>
        <taxon>Schizosaccharomycetes</taxon>
        <taxon>Schizosaccharomycetales</taxon>
        <taxon>Schizosaccharomycetaceae</taxon>
        <taxon>Schizosaccharomyces</taxon>
    </lineage>
</organism>